<accession>Q9UTG2</accession>
<organism>
    <name type="scientific">Schizosaccharomyces pombe (strain 972 / ATCC 24843)</name>
    <name type="common">Fission yeast</name>
    <dbReference type="NCBI Taxonomy" id="284812"/>
    <lineage>
        <taxon>Eukaryota</taxon>
        <taxon>Fungi</taxon>
        <taxon>Dikarya</taxon>
        <taxon>Ascomycota</taxon>
        <taxon>Taphrinomycotina</taxon>
        <taxon>Schizosaccharomycetes</taxon>
        <taxon>Schizosaccharomycetales</taxon>
        <taxon>Schizosaccharomycetaceae</taxon>
        <taxon>Schizosaccharomyces</taxon>
    </lineage>
</organism>
<name>PUB2_SCHPO</name>
<keyword id="KW-0002">3D-structure</keyword>
<keyword id="KW-0963">Cytoplasm</keyword>
<keyword id="KW-0472">Membrane</keyword>
<keyword id="KW-1185">Reference proteome</keyword>
<keyword id="KW-0808">Transferase</keyword>
<keyword id="KW-0833">Ubl conjugation pathway</keyword>
<sequence>MENIRFEVQLTILHVEGLWKNGLLRSLKPYLLISVDDDQFIKTNVASGTLRLSWGFTQKLTVSPQSIILLQLFDEKQKNETSDGFVGLGAAVVNSFLPFNNPKDDYKTRITLRSPSGSYRGSVVCLFKRSKFLPEELPADKSQICTDIIDDASGCAWETRIDEFGHVYYLKSPQLSVISAISHEKLENLTPKQLKEVFSQFLFNNQSKSSLKINLEYKVIKHLLEHYPLALSVRQQVAVEKGPLPAGWEMRLSEDYHVYFVDHSTKTTTWSDPRDNVVASDSVSENTDSIQQINDEYQRKIAYMYDRPEMAVNDAQLQLKVSRATTFEDAYDIISKLSVSDMKKKLLIRFRNEDGLDYGGVSREFFYILSHAIFNPGYSLFEYATDDNYGLQISPLSSVNPDFRSYFRFVGRVMGLAIYHRRYLDVQFVLPFYKRILQKPLCLEDVKDVDEVYYESLKWIKNNDVDESLCLNFSVEENRFGESVTVDLIPNGRNIAVNNQNKMNYLKALTEHKLVTSTEEQFNALKGGLNELIPDSVLQIFNENELDTLLNGKRDIDVQDWKRFTDYRSYTETDDIVIWFWELLSEWSPEKKAKLLQFATGTSRLPLSGFKDMHGSDGPRKFTIEKVGHISQLPKAHTCFNRLDIPPYNSKEELEQKLTIAIQETAGFGTE</sequence>
<proteinExistence type="evidence at protein level"/>
<gene>
    <name type="primary">pub2</name>
    <name type="ORF">SPAC1805.15c</name>
</gene>
<evidence type="ECO:0000255" key="1">
    <source>
        <dbReference type="PROSITE-ProRule" id="PRU00041"/>
    </source>
</evidence>
<evidence type="ECO:0000255" key="2">
    <source>
        <dbReference type="PROSITE-ProRule" id="PRU00104"/>
    </source>
</evidence>
<evidence type="ECO:0000255" key="3">
    <source>
        <dbReference type="PROSITE-ProRule" id="PRU00224"/>
    </source>
</evidence>
<evidence type="ECO:0000269" key="4">
    <source>
    </source>
</evidence>
<evidence type="ECO:0000269" key="5">
    <source>
    </source>
</evidence>
<evidence type="ECO:0000303" key="6">
    <source>
    </source>
</evidence>
<evidence type="ECO:0000305" key="7"/>
<evidence type="ECO:0007744" key="8">
    <source>
        <dbReference type="PDB" id="9B55"/>
    </source>
</evidence>
<evidence type="ECO:0007744" key="9">
    <source>
        <dbReference type="PDB" id="9B56"/>
    </source>
</evidence>
<evidence type="ECO:0007744" key="10">
    <source>
        <dbReference type="PDB" id="9B57"/>
    </source>
</evidence>
<evidence type="ECO:0007744" key="11">
    <source>
        <dbReference type="PDB" id="9B58"/>
    </source>
</evidence>
<evidence type="ECO:0007744" key="12">
    <source>
        <dbReference type="PDB" id="9B59"/>
    </source>
</evidence>
<evidence type="ECO:0007744" key="13">
    <source>
        <dbReference type="PDB" id="9B5A"/>
    </source>
</evidence>
<evidence type="ECO:0007744" key="14">
    <source>
        <dbReference type="PDB" id="9B5B"/>
    </source>
</evidence>
<protein>
    <recommendedName>
        <fullName>E3 ubiquitin-protein ligase pub2</fullName>
        <ecNumber evidence="5">2.3.2.26</ecNumber>
    </recommendedName>
    <alternativeName>
        <fullName evidence="6">HECT-type E3 ubiquitin transferase pub2</fullName>
    </alternativeName>
</protein>
<reference key="1">
    <citation type="journal article" date="2002" name="Nature">
        <title>The genome sequence of Schizosaccharomyces pombe.</title>
        <authorList>
            <person name="Wood V."/>
            <person name="Gwilliam R."/>
            <person name="Rajandream M.A."/>
            <person name="Lyne M.H."/>
            <person name="Lyne R."/>
            <person name="Stewart A."/>
            <person name="Sgouros J.G."/>
            <person name="Peat N."/>
            <person name="Hayles J."/>
            <person name="Baker S.G."/>
            <person name="Basham D."/>
            <person name="Bowman S."/>
            <person name="Brooks K."/>
            <person name="Brown D."/>
            <person name="Brown S."/>
            <person name="Chillingworth T."/>
            <person name="Churcher C.M."/>
            <person name="Collins M."/>
            <person name="Connor R."/>
            <person name="Cronin A."/>
            <person name="Davis P."/>
            <person name="Feltwell T."/>
            <person name="Fraser A."/>
            <person name="Gentles S."/>
            <person name="Goble A."/>
            <person name="Hamlin N."/>
            <person name="Harris D.E."/>
            <person name="Hidalgo J."/>
            <person name="Hodgson G."/>
            <person name="Holroyd S."/>
            <person name="Hornsby T."/>
            <person name="Howarth S."/>
            <person name="Huckle E.J."/>
            <person name="Hunt S."/>
            <person name="Jagels K."/>
            <person name="James K.D."/>
            <person name="Jones L."/>
            <person name="Jones M."/>
            <person name="Leather S."/>
            <person name="McDonald S."/>
            <person name="McLean J."/>
            <person name="Mooney P."/>
            <person name="Moule S."/>
            <person name="Mungall K.L."/>
            <person name="Murphy L.D."/>
            <person name="Niblett D."/>
            <person name="Odell C."/>
            <person name="Oliver K."/>
            <person name="O'Neil S."/>
            <person name="Pearson D."/>
            <person name="Quail M.A."/>
            <person name="Rabbinowitsch E."/>
            <person name="Rutherford K.M."/>
            <person name="Rutter S."/>
            <person name="Saunders D."/>
            <person name="Seeger K."/>
            <person name="Sharp S."/>
            <person name="Skelton J."/>
            <person name="Simmonds M.N."/>
            <person name="Squares R."/>
            <person name="Squares S."/>
            <person name="Stevens K."/>
            <person name="Taylor K."/>
            <person name="Taylor R.G."/>
            <person name="Tivey A."/>
            <person name="Walsh S.V."/>
            <person name="Warren T."/>
            <person name="Whitehead S."/>
            <person name="Woodward J.R."/>
            <person name="Volckaert G."/>
            <person name="Aert R."/>
            <person name="Robben J."/>
            <person name="Grymonprez B."/>
            <person name="Weltjens I."/>
            <person name="Vanstreels E."/>
            <person name="Rieger M."/>
            <person name="Schaefer M."/>
            <person name="Mueller-Auer S."/>
            <person name="Gabel C."/>
            <person name="Fuchs M."/>
            <person name="Duesterhoeft A."/>
            <person name="Fritzc C."/>
            <person name="Holzer E."/>
            <person name="Moestl D."/>
            <person name="Hilbert H."/>
            <person name="Borzym K."/>
            <person name="Langer I."/>
            <person name="Beck A."/>
            <person name="Lehrach H."/>
            <person name="Reinhardt R."/>
            <person name="Pohl T.M."/>
            <person name="Eger P."/>
            <person name="Zimmermann W."/>
            <person name="Wedler H."/>
            <person name="Wambutt R."/>
            <person name="Purnelle B."/>
            <person name="Goffeau A."/>
            <person name="Cadieu E."/>
            <person name="Dreano S."/>
            <person name="Gloux S."/>
            <person name="Lelaure V."/>
            <person name="Mottier S."/>
            <person name="Galibert F."/>
            <person name="Aves S.J."/>
            <person name="Xiang Z."/>
            <person name="Hunt C."/>
            <person name="Moore K."/>
            <person name="Hurst S.M."/>
            <person name="Lucas M."/>
            <person name="Rochet M."/>
            <person name="Gaillardin C."/>
            <person name="Tallada V.A."/>
            <person name="Garzon A."/>
            <person name="Thode G."/>
            <person name="Daga R.R."/>
            <person name="Cruzado L."/>
            <person name="Jimenez J."/>
            <person name="Sanchez M."/>
            <person name="del Rey F."/>
            <person name="Benito J."/>
            <person name="Dominguez A."/>
            <person name="Revuelta J.L."/>
            <person name="Moreno S."/>
            <person name="Armstrong J."/>
            <person name="Forsburg S.L."/>
            <person name="Cerutti L."/>
            <person name="Lowe T."/>
            <person name="McCombie W.R."/>
            <person name="Paulsen I."/>
            <person name="Potashkin J."/>
            <person name="Shpakovski G.V."/>
            <person name="Ussery D."/>
            <person name="Barrell B.G."/>
            <person name="Nurse P."/>
        </authorList>
    </citation>
    <scope>NUCLEOTIDE SEQUENCE [LARGE SCALE GENOMIC DNA]</scope>
    <source>
        <strain>972 / ATCC 24843</strain>
    </source>
</reference>
<reference key="2">
    <citation type="journal article" date="2002" name="J. Cell Sci.">
        <title>The novel HECT-type ubiquitin-protein ligase Pub2p shares partially overlapping function with Pub1p in Schizosaccharomyces pombe.</title>
        <authorList>
            <person name="Tamai K.K."/>
            <person name="Shimoda C."/>
        </authorList>
    </citation>
    <scope>FUNCTION</scope>
    <scope>SUBCELLULAR LOCATION</scope>
    <scope>MUTAGENESIS OF CYS-639</scope>
</reference>
<reference evidence="8 9 10 11 12 13 14" key="3">
    <citation type="journal article" date="2024" name="Nature">
        <title>Structural basis for transthiolation intermediates in the ubiquitin pathway.</title>
        <authorList>
            <person name="Kochanczyk T."/>
            <person name="Hann Z.S."/>
            <person name="Lux M.C."/>
            <person name="Delos Reyes A.M.V."/>
            <person name="Ji C."/>
            <person name="Tan D.S."/>
            <person name="Lima C.D."/>
        </authorList>
    </citation>
    <scope>STRUCTURE BY ELECTRON MICROSCOPY (3.23 ANGSTROMS) OF 295-671 IN COMPLEXES WITH UBC4 AND UEP1</scope>
    <scope>FUNCTION</scope>
    <scope>CATALYTIC ACTIVITY</scope>
    <scope>PATHWAY</scope>
    <scope>INTERACTION WITH UBC4</scope>
    <scope>MUTAGENESIS OF ASP-617; VAL-627; HIS-637; THR-638; PHE-640 AND ARG-642</scope>
</reference>
<feature type="chain" id="PRO_0000120333" description="E3 ubiquitin-protein ligase pub2">
    <location>
        <begin position="1"/>
        <end position="671"/>
    </location>
</feature>
<feature type="domain" description="C2" evidence="1">
    <location>
        <begin position="1"/>
        <end position="112"/>
    </location>
</feature>
<feature type="domain" description="WW" evidence="3">
    <location>
        <begin position="242"/>
        <end position="275"/>
    </location>
</feature>
<feature type="domain" description="HECT" evidence="2">
    <location>
        <begin position="338"/>
        <end position="671"/>
    </location>
</feature>
<feature type="active site" description="Glycyl thioester intermediate" evidence="7">
    <location>
        <position position="639"/>
    </location>
</feature>
<feature type="mutagenesis site" description="Reduces ubiquitin transfer between ubc4 and pub2." evidence="5">
    <original>D</original>
    <variation>A</variation>
    <location>
        <position position="617"/>
    </location>
</feature>
<feature type="mutagenesis site" description="Reduces ubiquitin transfer between ubc4 and pub2." evidence="5">
    <original>V</original>
    <variation>A</variation>
    <location>
        <position position="627"/>
    </location>
</feature>
<feature type="mutagenesis site" description="Reduces ubiquitin transfer between ubc4 and pub2." evidence="5">
    <original>H</original>
    <variation>A</variation>
    <location>
        <position position="637"/>
    </location>
</feature>
<feature type="mutagenesis site" description="Reduces ubiquitin transfer between ubc4 and pub2." evidence="5">
    <original>T</original>
    <variation>A</variation>
    <location>
        <position position="638"/>
    </location>
</feature>
<feature type="mutagenesis site" description="No growth arrest or cell elongation." evidence="4">
    <original>C</original>
    <variation>A</variation>
    <location>
        <position position="639"/>
    </location>
</feature>
<feature type="mutagenesis site" description="Abolishes ubiquitin transfer between ubc4 and pub2." evidence="5">
    <original>F</original>
    <variation>A</variation>
    <location>
        <position position="640"/>
    </location>
</feature>
<feature type="mutagenesis site" description="Reduces ubiquitin transfer between ubc4 and pub2." evidence="5">
    <original>R</original>
    <variation>A</variation>
    <location>
        <position position="642"/>
    </location>
</feature>
<comment type="function">
    <text evidence="4 5">E3 ubiquitin-protein ligase which accepts ubiquitin from an E2 ubiquitin-conjugating enzyme in the form of a thioester and then directly transfers the ubiquitin to targeted substrates.</text>
</comment>
<comment type="catalytic activity">
    <reaction evidence="5">
        <text>S-ubiquitinyl-[E2 ubiquitin-conjugating enzyme]-L-cysteine + [acceptor protein]-L-lysine = [E2 ubiquitin-conjugating enzyme]-L-cysteine + N(6)-ubiquitinyl-[acceptor protein]-L-lysine.</text>
        <dbReference type="EC" id="2.3.2.26"/>
    </reaction>
</comment>
<comment type="pathway">
    <text evidence="5">Protein modification; protein ubiquitination.</text>
</comment>
<comment type="subunit">
    <text evidence="5">Interacts with the E2 ubiquitin-conjugating enzyme ubc4.</text>
</comment>
<comment type="subcellular location">
    <subcellularLocation>
        <location evidence="4">Membrane</location>
        <topology evidence="4">Peripheral membrane protein</topology>
    </subcellularLocation>
    <subcellularLocation>
        <location evidence="4">Cytoplasm</location>
    </subcellularLocation>
    <text>Predominantly found at the cell surface of the polar regions.</text>
</comment>
<comment type="miscellaneous">
    <text>A cysteine residue is required for ubiquitin-thioester formation.</text>
</comment>
<dbReference type="EC" id="2.3.2.26" evidence="5"/>
<dbReference type="EMBL" id="CU329670">
    <property type="protein sequence ID" value="CAB55856.1"/>
    <property type="molecule type" value="Genomic_DNA"/>
</dbReference>
<dbReference type="PIR" id="T37900">
    <property type="entry name" value="T37900"/>
</dbReference>
<dbReference type="RefSeq" id="NP_593926.1">
    <property type="nucleotide sequence ID" value="NM_001019355.2"/>
</dbReference>
<dbReference type="PDB" id="9B55">
    <property type="method" value="EM"/>
    <property type="resolution" value="3.23 A"/>
    <property type="chains" value="C=295-671"/>
</dbReference>
<dbReference type="PDB" id="9B56">
    <property type="method" value="EM"/>
    <property type="resolution" value="3.35 A"/>
    <property type="chains" value="C=295-671"/>
</dbReference>
<dbReference type="PDB" id="9B57">
    <property type="method" value="EM"/>
    <property type="resolution" value="3.37 A"/>
    <property type="chains" value="C=295-671"/>
</dbReference>
<dbReference type="PDB" id="9B58">
    <property type="method" value="EM"/>
    <property type="resolution" value="3.39 A"/>
    <property type="chains" value="C=295-671"/>
</dbReference>
<dbReference type="PDB" id="9B59">
    <property type="method" value="EM"/>
    <property type="resolution" value="3.49 A"/>
    <property type="chains" value="C=295-671"/>
</dbReference>
<dbReference type="PDB" id="9B5A">
    <property type="method" value="EM"/>
    <property type="resolution" value="3.65 A"/>
    <property type="chains" value="C=295-671"/>
</dbReference>
<dbReference type="PDB" id="9B5B">
    <property type="method" value="EM"/>
    <property type="resolution" value="3.31 A"/>
    <property type="chains" value="C=295-671"/>
</dbReference>
<dbReference type="PDBsum" id="9B55"/>
<dbReference type="PDBsum" id="9B56"/>
<dbReference type="PDBsum" id="9B57"/>
<dbReference type="PDBsum" id="9B58"/>
<dbReference type="PDBsum" id="9B59"/>
<dbReference type="PDBsum" id="9B5A"/>
<dbReference type="PDBsum" id="9B5B"/>
<dbReference type="EMDB" id="EMD-44200"/>
<dbReference type="EMDB" id="EMD-44201"/>
<dbReference type="EMDB" id="EMD-44202"/>
<dbReference type="EMDB" id="EMD-44203"/>
<dbReference type="EMDB" id="EMD-44204"/>
<dbReference type="EMDB" id="EMD-44205"/>
<dbReference type="EMDB" id="EMD-44206"/>
<dbReference type="SMR" id="Q9UTG2"/>
<dbReference type="BioGRID" id="278894">
    <property type="interactions" value="8"/>
</dbReference>
<dbReference type="FunCoup" id="Q9UTG2">
    <property type="interactions" value="580"/>
</dbReference>
<dbReference type="STRING" id="284812.Q9UTG2"/>
<dbReference type="iPTMnet" id="Q9UTG2"/>
<dbReference type="PaxDb" id="4896-SPAC1805.15c.1"/>
<dbReference type="EnsemblFungi" id="SPAC1805.15c.1">
    <property type="protein sequence ID" value="SPAC1805.15c.1:pep"/>
    <property type="gene ID" value="SPAC1805.15c"/>
</dbReference>
<dbReference type="GeneID" id="2542432"/>
<dbReference type="KEGG" id="spo:2542432"/>
<dbReference type="PomBase" id="SPAC1805.15c">
    <property type="gene designation" value="pub2"/>
</dbReference>
<dbReference type="VEuPathDB" id="FungiDB:SPAC1805.15c"/>
<dbReference type="eggNOG" id="KOG0940">
    <property type="taxonomic scope" value="Eukaryota"/>
</dbReference>
<dbReference type="HOGENOM" id="CLU_002173_0_0_1"/>
<dbReference type="InParanoid" id="Q9UTG2"/>
<dbReference type="OMA" id="AIFHRRY"/>
<dbReference type="PhylomeDB" id="Q9UTG2"/>
<dbReference type="Reactome" id="R-SPO-8948747">
    <property type="pathway name" value="Regulation of PTEN localization"/>
</dbReference>
<dbReference type="Reactome" id="R-SPO-8948751">
    <property type="pathway name" value="Regulation of PTEN stability and activity"/>
</dbReference>
<dbReference type="Reactome" id="R-SPO-9013406">
    <property type="pathway name" value="RHOQ GTPase cycle"/>
</dbReference>
<dbReference type="Reactome" id="R-SPO-9013420">
    <property type="pathway name" value="RHOU GTPase cycle"/>
</dbReference>
<dbReference type="Reactome" id="R-SPO-983168">
    <property type="pathway name" value="Antigen processing: Ubiquitination &amp; Proteasome degradation"/>
</dbReference>
<dbReference type="UniPathway" id="UPA00143"/>
<dbReference type="PRO" id="PR:Q9UTG2"/>
<dbReference type="Proteomes" id="UP000002485">
    <property type="component" value="Chromosome I"/>
</dbReference>
<dbReference type="GO" id="GO:0051285">
    <property type="term" value="C:cell cortex of cell tip"/>
    <property type="evidence" value="ECO:0000314"/>
    <property type="project" value="PomBase"/>
</dbReference>
<dbReference type="GO" id="GO:0032153">
    <property type="term" value="C:cell division site"/>
    <property type="evidence" value="ECO:0000314"/>
    <property type="project" value="PomBase"/>
</dbReference>
<dbReference type="GO" id="GO:0005737">
    <property type="term" value="C:cytoplasm"/>
    <property type="evidence" value="ECO:0000314"/>
    <property type="project" value="PomBase"/>
</dbReference>
<dbReference type="GO" id="GO:0005829">
    <property type="term" value="C:cytosol"/>
    <property type="evidence" value="ECO:0007005"/>
    <property type="project" value="PomBase"/>
</dbReference>
<dbReference type="GO" id="GO:0016020">
    <property type="term" value="C:membrane"/>
    <property type="evidence" value="ECO:0007669"/>
    <property type="project" value="UniProtKB-SubCell"/>
</dbReference>
<dbReference type="GO" id="GO:0005634">
    <property type="term" value="C:nucleus"/>
    <property type="evidence" value="ECO:0000314"/>
    <property type="project" value="PomBase"/>
</dbReference>
<dbReference type="GO" id="GO:0061630">
    <property type="term" value="F:ubiquitin protein ligase activity"/>
    <property type="evidence" value="ECO:0000315"/>
    <property type="project" value="PomBase"/>
</dbReference>
<dbReference type="GO" id="GO:0120113">
    <property type="term" value="P:cytoplasm to vacuole targeting by the NVT pathway"/>
    <property type="evidence" value="ECO:0000315"/>
    <property type="project" value="PomBase"/>
</dbReference>
<dbReference type="GO" id="GO:0016567">
    <property type="term" value="P:protein ubiquitination"/>
    <property type="evidence" value="ECO:0007669"/>
    <property type="project" value="UniProtKB-UniPathway"/>
</dbReference>
<dbReference type="GO" id="GO:0006511">
    <property type="term" value="P:ubiquitin-dependent protein catabolic process"/>
    <property type="evidence" value="ECO:0000318"/>
    <property type="project" value="GO_Central"/>
</dbReference>
<dbReference type="CDD" id="cd08382">
    <property type="entry name" value="C2_Smurf-like"/>
    <property type="match status" value="1"/>
</dbReference>
<dbReference type="CDD" id="cd00078">
    <property type="entry name" value="HECTc"/>
    <property type="match status" value="1"/>
</dbReference>
<dbReference type="CDD" id="cd00201">
    <property type="entry name" value="WW"/>
    <property type="match status" value="1"/>
</dbReference>
<dbReference type="FunFam" id="3.90.1750.10:FF:000079">
    <property type="entry name" value="E3 ubiquitin-protein ligase"/>
    <property type="match status" value="1"/>
</dbReference>
<dbReference type="FunFam" id="3.30.2160.10:FF:000001">
    <property type="entry name" value="E3 ubiquitin-protein ligase NEDD4-like"/>
    <property type="match status" value="1"/>
</dbReference>
<dbReference type="FunFam" id="3.30.2410.10:FF:000037">
    <property type="entry name" value="E3 ubiquitin-protein ligase pub2"/>
    <property type="match status" value="1"/>
</dbReference>
<dbReference type="Gene3D" id="2.60.40.150">
    <property type="entry name" value="C2 domain"/>
    <property type="match status" value="1"/>
</dbReference>
<dbReference type="Gene3D" id="3.30.2160.10">
    <property type="entry name" value="Hect, E3 ligase catalytic domain"/>
    <property type="match status" value="1"/>
</dbReference>
<dbReference type="Gene3D" id="3.30.2410.10">
    <property type="entry name" value="Hect, E3 ligase catalytic domain"/>
    <property type="match status" value="1"/>
</dbReference>
<dbReference type="Gene3D" id="3.90.1750.10">
    <property type="entry name" value="Hect, E3 ligase catalytic domains"/>
    <property type="match status" value="1"/>
</dbReference>
<dbReference type="InterPro" id="IPR000008">
    <property type="entry name" value="C2_dom"/>
</dbReference>
<dbReference type="InterPro" id="IPR035892">
    <property type="entry name" value="C2_domain_sf"/>
</dbReference>
<dbReference type="InterPro" id="IPR024928">
    <property type="entry name" value="E3_ub_ligase_SMURF1"/>
</dbReference>
<dbReference type="InterPro" id="IPR050409">
    <property type="entry name" value="E3_ubiq-protein_ligase"/>
</dbReference>
<dbReference type="InterPro" id="IPR000569">
    <property type="entry name" value="HECT_dom"/>
</dbReference>
<dbReference type="InterPro" id="IPR035983">
    <property type="entry name" value="Hect_E3_ubiquitin_ligase"/>
</dbReference>
<dbReference type="InterPro" id="IPR001202">
    <property type="entry name" value="WW_dom"/>
</dbReference>
<dbReference type="InterPro" id="IPR036020">
    <property type="entry name" value="WW_dom_sf"/>
</dbReference>
<dbReference type="PANTHER" id="PTHR11254:SF438">
    <property type="entry name" value="E3 UBIQUITIN-PROTEIN LIGASE PUB2"/>
    <property type="match status" value="1"/>
</dbReference>
<dbReference type="PANTHER" id="PTHR11254">
    <property type="entry name" value="HECT DOMAIN UBIQUITIN-PROTEIN LIGASE"/>
    <property type="match status" value="1"/>
</dbReference>
<dbReference type="Pfam" id="PF00632">
    <property type="entry name" value="HECT"/>
    <property type="match status" value="1"/>
</dbReference>
<dbReference type="Pfam" id="PF00397">
    <property type="entry name" value="WW"/>
    <property type="match status" value="1"/>
</dbReference>
<dbReference type="PIRSF" id="PIRSF001569">
    <property type="entry name" value="E3_ub_ligase_SMURF1"/>
    <property type="match status" value="1"/>
</dbReference>
<dbReference type="SMART" id="SM00119">
    <property type="entry name" value="HECTc"/>
    <property type="match status" value="1"/>
</dbReference>
<dbReference type="SMART" id="SM00456">
    <property type="entry name" value="WW"/>
    <property type="match status" value="1"/>
</dbReference>
<dbReference type="SUPFAM" id="SSF49562">
    <property type="entry name" value="C2 domain (Calcium/lipid-binding domain, CaLB)"/>
    <property type="match status" value="1"/>
</dbReference>
<dbReference type="SUPFAM" id="SSF56204">
    <property type="entry name" value="Hect, E3 ligase catalytic domain"/>
    <property type="match status" value="1"/>
</dbReference>
<dbReference type="SUPFAM" id="SSF51045">
    <property type="entry name" value="WW domain"/>
    <property type="match status" value="1"/>
</dbReference>
<dbReference type="PROSITE" id="PS50004">
    <property type="entry name" value="C2"/>
    <property type="match status" value="1"/>
</dbReference>
<dbReference type="PROSITE" id="PS50237">
    <property type="entry name" value="HECT"/>
    <property type="match status" value="1"/>
</dbReference>
<dbReference type="PROSITE" id="PS01159">
    <property type="entry name" value="WW_DOMAIN_1"/>
    <property type="match status" value="1"/>
</dbReference>
<dbReference type="PROSITE" id="PS50020">
    <property type="entry name" value="WW_DOMAIN_2"/>
    <property type="match status" value="1"/>
</dbReference>